<sequence length="168" mass="17648">MALNLEDKKAVVAEVTAQVAKASTIVVAEYRGITVGDLTKLRAQARQQGVYLRVLKNTLARRAVEGTPFAELAEQLTGPLIYGISEDAVAPAKVLNDFAKGNDKLVLRAGSYDGKVLDVDAVKALATIPSREELLSKLLFVMQAPVSGFARALGALAAKQGEGEAAAA</sequence>
<gene>
    <name evidence="1" type="primary">rplJ</name>
    <name type="ordered locus">Rpic_3316</name>
</gene>
<reference key="1">
    <citation type="submission" date="2008-05" db="EMBL/GenBank/DDBJ databases">
        <title>Complete sequence of chromosome 1 of Ralstonia pickettii 12J.</title>
        <authorList>
            <person name="Lucas S."/>
            <person name="Copeland A."/>
            <person name="Lapidus A."/>
            <person name="Glavina del Rio T."/>
            <person name="Dalin E."/>
            <person name="Tice H."/>
            <person name="Bruce D."/>
            <person name="Goodwin L."/>
            <person name="Pitluck S."/>
            <person name="Meincke L."/>
            <person name="Brettin T."/>
            <person name="Detter J.C."/>
            <person name="Han C."/>
            <person name="Kuske C.R."/>
            <person name="Schmutz J."/>
            <person name="Larimer F."/>
            <person name="Land M."/>
            <person name="Hauser L."/>
            <person name="Kyrpides N."/>
            <person name="Mikhailova N."/>
            <person name="Marsh T."/>
            <person name="Richardson P."/>
        </authorList>
    </citation>
    <scope>NUCLEOTIDE SEQUENCE [LARGE SCALE GENOMIC DNA]</scope>
    <source>
        <strain>12J</strain>
    </source>
</reference>
<name>RL10_RALPJ</name>
<keyword id="KW-0687">Ribonucleoprotein</keyword>
<keyword id="KW-0689">Ribosomal protein</keyword>
<keyword id="KW-0694">RNA-binding</keyword>
<keyword id="KW-0699">rRNA-binding</keyword>
<comment type="function">
    <text evidence="1">Forms part of the ribosomal stalk, playing a central role in the interaction of the ribosome with GTP-bound translation factors.</text>
</comment>
<comment type="subunit">
    <text evidence="1">Part of the ribosomal stalk of the 50S ribosomal subunit. The N-terminus interacts with L11 and the large rRNA to form the base of the stalk. The C-terminus forms an elongated spine to which L12 dimers bind in a sequential fashion forming a multimeric L10(L12)X complex.</text>
</comment>
<comment type="similarity">
    <text evidence="1">Belongs to the universal ribosomal protein uL10 family.</text>
</comment>
<dbReference type="EMBL" id="CP001068">
    <property type="protein sequence ID" value="ACD28438.1"/>
    <property type="molecule type" value="Genomic_DNA"/>
</dbReference>
<dbReference type="SMR" id="B2UEN8"/>
<dbReference type="STRING" id="402626.Rpic_3316"/>
<dbReference type="KEGG" id="rpi:Rpic_3316"/>
<dbReference type="eggNOG" id="COG0244">
    <property type="taxonomic scope" value="Bacteria"/>
</dbReference>
<dbReference type="HOGENOM" id="CLU_092227_0_1_4"/>
<dbReference type="GO" id="GO:0015934">
    <property type="term" value="C:large ribosomal subunit"/>
    <property type="evidence" value="ECO:0007669"/>
    <property type="project" value="InterPro"/>
</dbReference>
<dbReference type="GO" id="GO:0070180">
    <property type="term" value="F:large ribosomal subunit rRNA binding"/>
    <property type="evidence" value="ECO:0007669"/>
    <property type="project" value="UniProtKB-UniRule"/>
</dbReference>
<dbReference type="GO" id="GO:0003735">
    <property type="term" value="F:structural constituent of ribosome"/>
    <property type="evidence" value="ECO:0007669"/>
    <property type="project" value="InterPro"/>
</dbReference>
<dbReference type="GO" id="GO:0006412">
    <property type="term" value="P:translation"/>
    <property type="evidence" value="ECO:0007669"/>
    <property type="project" value="UniProtKB-UniRule"/>
</dbReference>
<dbReference type="CDD" id="cd05797">
    <property type="entry name" value="Ribosomal_L10"/>
    <property type="match status" value="1"/>
</dbReference>
<dbReference type="Gene3D" id="3.30.70.1730">
    <property type="match status" value="1"/>
</dbReference>
<dbReference type="Gene3D" id="6.10.250.290">
    <property type="match status" value="1"/>
</dbReference>
<dbReference type="HAMAP" id="MF_00362">
    <property type="entry name" value="Ribosomal_uL10"/>
    <property type="match status" value="1"/>
</dbReference>
<dbReference type="InterPro" id="IPR001790">
    <property type="entry name" value="Ribosomal_uL10"/>
</dbReference>
<dbReference type="InterPro" id="IPR043141">
    <property type="entry name" value="Ribosomal_uL10-like_sf"/>
</dbReference>
<dbReference type="InterPro" id="IPR022973">
    <property type="entry name" value="Ribosomal_uL10_bac"/>
</dbReference>
<dbReference type="InterPro" id="IPR047865">
    <property type="entry name" value="Ribosomal_uL10_bac_type"/>
</dbReference>
<dbReference type="InterPro" id="IPR002363">
    <property type="entry name" value="Ribosomal_uL10_CS_bac"/>
</dbReference>
<dbReference type="NCBIfam" id="NF000955">
    <property type="entry name" value="PRK00099.1-1"/>
    <property type="match status" value="1"/>
</dbReference>
<dbReference type="PANTHER" id="PTHR11560">
    <property type="entry name" value="39S RIBOSOMAL PROTEIN L10, MITOCHONDRIAL"/>
    <property type="match status" value="1"/>
</dbReference>
<dbReference type="Pfam" id="PF00466">
    <property type="entry name" value="Ribosomal_L10"/>
    <property type="match status" value="1"/>
</dbReference>
<dbReference type="SUPFAM" id="SSF160369">
    <property type="entry name" value="Ribosomal protein L10-like"/>
    <property type="match status" value="1"/>
</dbReference>
<dbReference type="PROSITE" id="PS01109">
    <property type="entry name" value="RIBOSOMAL_L10"/>
    <property type="match status" value="1"/>
</dbReference>
<evidence type="ECO:0000255" key="1">
    <source>
        <dbReference type="HAMAP-Rule" id="MF_00362"/>
    </source>
</evidence>
<evidence type="ECO:0000305" key="2"/>
<organism>
    <name type="scientific">Ralstonia pickettii (strain 12J)</name>
    <dbReference type="NCBI Taxonomy" id="402626"/>
    <lineage>
        <taxon>Bacteria</taxon>
        <taxon>Pseudomonadati</taxon>
        <taxon>Pseudomonadota</taxon>
        <taxon>Betaproteobacteria</taxon>
        <taxon>Burkholderiales</taxon>
        <taxon>Burkholderiaceae</taxon>
        <taxon>Ralstonia</taxon>
    </lineage>
</organism>
<accession>B2UEN8</accession>
<feature type="chain" id="PRO_1000121001" description="Large ribosomal subunit protein uL10">
    <location>
        <begin position="1"/>
        <end position="168"/>
    </location>
</feature>
<proteinExistence type="inferred from homology"/>
<protein>
    <recommendedName>
        <fullName evidence="1">Large ribosomal subunit protein uL10</fullName>
    </recommendedName>
    <alternativeName>
        <fullName evidence="2">50S ribosomal protein L10</fullName>
    </alternativeName>
</protein>